<organism>
    <name type="scientific">Mycobacterium tuberculosis (strain CDC 1551 / Oshkosh)</name>
    <dbReference type="NCBI Taxonomy" id="83331"/>
    <lineage>
        <taxon>Bacteria</taxon>
        <taxon>Bacillati</taxon>
        <taxon>Actinomycetota</taxon>
        <taxon>Actinomycetes</taxon>
        <taxon>Mycobacteriales</taxon>
        <taxon>Mycobacteriaceae</taxon>
        <taxon>Mycobacterium</taxon>
        <taxon>Mycobacterium tuberculosis complex</taxon>
    </lineage>
</organism>
<proteinExistence type="inferred from homology"/>
<name>ESPG3_MYCTO</name>
<accession>P9WJC6</accession>
<accession>L0T4X8</accession>
<accession>O53694</accession>
<accession>Q7DA33</accession>
<evidence type="ECO:0000250" key="1">
    <source>
        <dbReference type="UniProtKB" id="B2HSU5"/>
    </source>
</evidence>
<evidence type="ECO:0000250" key="2">
    <source>
        <dbReference type="UniProtKB" id="O53943"/>
    </source>
</evidence>
<evidence type="ECO:0000250" key="3">
    <source>
        <dbReference type="UniProtKB" id="P9WJC7"/>
    </source>
</evidence>
<evidence type="ECO:0000305" key="4"/>
<protein>
    <recommendedName>
        <fullName evidence="4">ESX-3 secretion-associated protein EspG3</fullName>
    </recommendedName>
</protein>
<reference key="1">
    <citation type="journal article" date="2002" name="J. Bacteriol.">
        <title>Whole-genome comparison of Mycobacterium tuberculosis clinical and laboratory strains.</title>
        <authorList>
            <person name="Fleischmann R.D."/>
            <person name="Alland D."/>
            <person name="Eisen J.A."/>
            <person name="Carpenter L."/>
            <person name="White O."/>
            <person name="Peterson J.D."/>
            <person name="DeBoy R.T."/>
            <person name="Dodson R.J."/>
            <person name="Gwinn M.L."/>
            <person name="Haft D.H."/>
            <person name="Hickey E.K."/>
            <person name="Kolonay J.F."/>
            <person name="Nelson W.C."/>
            <person name="Umayam L.A."/>
            <person name="Ermolaeva M.D."/>
            <person name="Salzberg S.L."/>
            <person name="Delcher A."/>
            <person name="Utterback T.R."/>
            <person name="Weidman J.F."/>
            <person name="Khouri H.M."/>
            <person name="Gill J."/>
            <person name="Mikula A."/>
            <person name="Bishai W."/>
            <person name="Jacobs W.R. Jr."/>
            <person name="Venter J.C."/>
            <person name="Fraser C.M."/>
        </authorList>
    </citation>
    <scope>NUCLEOTIDE SEQUENCE [LARGE SCALE GENOMIC DNA]</scope>
    <source>
        <strain>CDC 1551 / Oshkosh</strain>
    </source>
</reference>
<keyword id="KW-0143">Chaperone</keyword>
<keyword id="KW-0963">Cytoplasm</keyword>
<keyword id="KW-1185">Reference proteome</keyword>
<dbReference type="EMBL" id="AE000516">
    <property type="protein sequence ID" value="AAK44526.1"/>
    <property type="molecule type" value="Genomic_DNA"/>
</dbReference>
<dbReference type="PIR" id="G70836">
    <property type="entry name" value="G70836"/>
</dbReference>
<dbReference type="RefSeq" id="WP_003401521.1">
    <property type="nucleotide sequence ID" value="NZ_KK341227.1"/>
</dbReference>
<dbReference type="SASBDB" id="P9WJC6"/>
<dbReference type="SMR" id="P9WJC6"/>
<dbReference type="GeneID" id="45424263"/>
<dbReference type="KEGG" id="mtc:MT0302"/>
<dbReference type="PATRIC" id="fig|83331.31.peg.325"/>
<dbReference type="HOGENOM" id="CLU_073321_0_0_11"/>
<dbReference type="EvolutionaryTrace" id="P9WJC6"/>
<dbReference type="Proteomes" id="UP000001020">
    <property type="component" value="Chromosome"/>
</dbReference>
<dbReference type="GO" id="GO:0005737">
    <property type="term" value="C:cytoplasm"/>
    <property type="evidence" value="ECO:0007669"/>
    <property type="project" value="UniProtKB-SubCell"/>
</dbReference>
<dbReference type="InterPro" id="IPR025734">
    <property type="entry name" value="EspG"/>
</dbReference>
<dbReference type="Pfam" id="PF14011">
    <property type="entry name" value="ESX-1_EspG"/>
    <property type="match status" value="1"/>
</dbReference>
<feature type="chain" id="PRO_0000427853" description="ESX-3 secretion-associated protein EspG3">
    <location>
        <begin position="1"/>
        <end position="295"/>
    </location>
</feature>
<sequence length="295" mass="31559">MDATPNAVELTVDNAWFIAETIGAGTFPWVLAITMPYSDAAQRGAFVDRQRDELTRMGLLSPQGVINPAVADWIKVVCFPDRWLDLRYVGPASADGACELLRGIVALRTGTGKTSNKTGNGVVALRNAQLVTFTAMDIDDPRALVPILGVGLAHRPPARFDEFSLPTRVGARADERLRSGVPLGEVVDYLGIPASARPVVESVFSGPRSYVEIVAGCNRDGRHTTTEVGLSIVDTSAGRVLVSPSRAFDGEWVSTFSPGTPFAIAVAIQTLTACLPDGQWFPGQRVSRDFSTQSS</sequence>
<comment type="function">
    <text evidence="2">Specific chaperone for cognate PE/PPE proteins. Plays an important role in preventing aggregation of PE/PPE dimers.</text>
</comment>
<comment type="subunit">
    <text evidence="2">Interacts specifically with ESX-3-dependent PE/PPE proteins.</text>
</comment>
<comment type="subcellular location">
    <subcellularLocation>
        <location evidence="1">Cytoplasm</location>
    </subcellularLocation>
</comment>
<comment type="similarity">
    <text evidence="4">Belongs to the EspG family.</text>
</comment>
<gene>
    <name evidence="3" type="primary">espG3</name>
    <name type="ordered locus">MT0302</name>
</gene>